<name>Y255_ENCCU</name>
<gene>
    <name type="ordered locus">ECU02_0550</name>
</gene>
<accession>Q8SSH1</accession>
<dbReference type="EC" id="2.7.11.1"/>
<dbReference type="EMBL" id="AL590442">
    <property type="protein sequence ID" value="CAD25086.1"/>
    <property type="molecule type" value="Genomic_DNA"/>
</dbReference>
<dbReference type="RefSeq" id="NP_584582.1">
    <property type="nucleotide sequence ID" value="NM_001040771.1"/>
</dbReference>
<dbReference type="SMR" id="Q8SSH1"/>
<dbReference type="STRING" id="284813.Q8SSH1"/>
<dbReference type="GeneID" id="858572"/>
<dbReference type="KEGG" id="ecu:ECU02_0550"/>
<dbReference type="VEuPathDB" id="MicrosporidiaDB:ECU02_0550"/>
<dbReference type="HOGENOM" id="CLU_531021_0_0_1"/>
<dbReference type="InParanoid" id="Q8SSH1"/>
<dbReference type="OMA" id="FLIFRCD"/>
<dbReference type="OrthoDB" id="4062651at2759"/>
<dbReference type="Proteomes" id="UP000000819">
    <property type="component" value="Chromosome II"/>
</dbReference>
<dbReference type="GO" id="GO:0005634">
    <property type="term" value="C:nucleus"/>
    <property type="evidence" value="ECO:0007669"/>
    <property type="project" value="TreeGrafter"/>
</dbReference>
<dbReference type="GO" id="GO:0005524">
    <property type="term" value="F:ATP binding"/>
    <property type="evidence" value="ECO:0007669"/>
    <property type="project" value="UniProtKB-KW"/>
</dbReference>
<dbReference type="GO" id="GO:0106310">
    <property type="term" value="F:protein serine kinase activity"/>
    <property type="evidence" value="ECO:0007669"/>
    <property type="project" value="RHEA"/>
</dbReference>
<dbReference type="GO" id="GO:0004674">
    <property type="term" value="F:protein serine/threonine kinase activity"/>
    <property type="evidence" value="ECO:0007669"/>
    <property type="project" value="UniProtKB-KW"/>
</dbReference>
<dbReference type="Gene3D" id="1.10.510.10">
    <property type="entry name" value="Transferase(Phosphotransferase) domain 1"/>
    <property type="match status" value="1"/>
</dbReference>
<dbReference type="InterPro" id="IPR011009">
    <property type="entry name" value="Kinase-like_dom_sf"/>
</dbReference>
<dbReference type="InterPro" id="IPR000719">
    <property type="entry name" value="Prot_kinase_dom"/>
</dbReference>
<dbReference type="InterPro" id="IPR017441">
    <property type="entry name" value="Protein_kinase_ATP_BS"/>
</dbReference>
<dbReference type="InterPro" id="IPR008271">
    <property type="entry name" value="Ser/Thr_kinase_AS"/>
</dbReference>
<dbReference type="PANTHER" id="PTHR24345">
    <property type="entry name" value="SERINE/THREONINE-PROTEIN KINASE PLK"/>
    <property type="match status" value="1"/>
</dbReference>
<dbReference type="PANTHER" id="PTHR24345:SF91">
    <property type="entry name" value="SERINE_THREONINE-PROTEIN KINASE PLK4"/>
    <property type="match status" value="1"/>
</dbReference>
<dbReference type="Pfam" id="PF00069">
    <property type="entry name" value="Pkinase"/>
    <property type="match status" value="1"/>
</dbReference>
<dbReference type="SMART" id="SM00220">
    <property type="entry name" value="S_TKc"/>
    <property type="match status" value="1"/>
</dbReference>
<dbReference type="SUPFAM" id="SSF56112">
    <property type="entry name" value="Protein kinase-like (PK-like)"/>
    <property type="match status" value="1"/>
</dbReference>
<dbReference type="PROSITE" id="PS00107">
    <property type="entry name" value="PROTEIN_KINASE_ATP"/>
    <property type="match status" value="1"/>
</dbReference>
<dbReference type="PROSITE" id="PS50011">
    <property type="entry name" value="PROTEIN_KINASE_DOM"/>
    <property type="match status" value="1"/>
</dbReference>
<dbReference type="PROSITE" id="PS00108">
    <property type="entry name" value="PROTEIN_KINASE_ST"/>
    <property type="match status" value="1"/>
</dbReference>
<keyword id="KW-0067">ATP-binding</keyword>
<keyword id="KW-0418">Kinase</keyword>
<keyword id="KW-0547">Nucleotide-binding</keyword>
<keyword id="KW-1185">Reference proteome</keyword>
<keyword id="KW-0723">Serine/threonine-protein kinase</keyword>
<keyword id="KW-0808">Transferase</keyword>
<sequence>MERYKLRQVIGEGASSTVYSGVSARGEEVAVKVVPRKGRSTGMVYREIEMLSTIKHENIVGIVGRFESKKHVYMVEELCDFNLVSFLNEYEVDEDVALKILRMILCGLRHIHSLGIIHRDLKLGNILLKGNTVKICDFGLSCYVEENNSEFCGTMDYLAPEVVDGKKYSFGVDMWSAGVVFYVLLTKKKFCESLDSLECSEELRDLLEKLLERDESKRADASEALMHRSFSRFIPRCEDFRGLPGFERGTKYGVLRKAGDSVELGSIRIDARRGKRHGGGRKHGDLGCLCGEEFTYSVYVDSEEIEPAFITNGQLKTLGLLTAHVKAMREKTPKIIIDDDGNKFYYMFSGGFVYVGKELTLRARGGKYEMSRRSGEKTYLEAVPDFLYEAIGGLEARCKAIDKEVCWFSRESPVLIDCSSHQQFSMSCISQVSEMSIRNRVEYDYIESTGWCIRDGLNFLFLMNDGEMFEVLCPDLAVRYRGRLLFIDDRLPMKLKRSLKGISPFLRSLCDGCYMS</sequence>
<reference key="1">
    <citation type="journal article" date="2001" name="Nature">
        <title>Genome sequence and gene compaction of the eukaryote parasite Encephalitozoon cuniculi.</title>
        <authorList>
            <person name="Katinka M.D."/>
            <person name="Duprat S."/>
            <person name="Cornillot E."/>
            <person name="Metenier G."/>
            <person name="Thomarat F."/>
            <person name="Prensier G."/>
            <person name="Barbe V."/>
            <person name="Peyretaillade E."/>
            <person name="Brottier P."/>
            <person name="Wincker P."/>
            <person name="Delbac F."/>
            <person name="El Alaoui H."/>
            <person name="Peyret P."/>
            <person name="Saurin W."/>
            <person name="Gouy M."/>
            <person name="Weissenbach J."/>
            <person name="Vivares C.P."/>
        </authorList>
    </citation>
    <scope>NUCLEOTIDE SEQUENCE [LARGE SCALE GENOMIC DNA]</scope>
    <source>
        <strain>GB-M1</strain>
    </source>
</reference>
<reference key="2">
    <citation type="journal article" date="2007" name="BMC Genomics">
        <title>The complement of protein kinases of the microsporidium Encephalitozoon cuniculi in relation to those of Saccharomyces cerevisiae and Schizosaccharomyces pombe.</title>
        <authorList>
            <person name="Miranda-Saavedra D."/>
            <person name="Stark M.J.R."/>
            <person name="Packer J.C."/>
            <person name="Vivares C.P."/>
            <person name="Doerig C."/>
            <person name="Barton G.J."/>
        </authorList>
    </citation>
    <scope>PREDICTION OF FUNCTION</scope>
</reference>
<organism>
    <name type="scientific">Encephalitozoon cuniculi (strain GB-M1)</name>
    <name type="common">Microsporidian parasite</name>
    <dbReference type="NCBI Taxonomy" id="284813"/>
    <lineage>
        <taxon>Eukaryota</taxon>
        <taxon>Fungi</taxon>
        <taxon>Fungi incertae sedis</taxon>
        <taxon>Microsporidia</taxon>
        <taxon>Unikaryonidae</taxon>
        <taxon>Encephalitozoon</taxon>
    </lineage>
</organism>
<feature type="chain" id="PRO_0000384425" description="Probable serine/threonine-protein kinase ECU02_0550">
    <location>
        <begin position="1"/>
        <end position="516"/>
    </location>
</feature>
<feature type="domain" description="Protein kinase" evidence="1">
    <location>
        <begin position="4"/>
        <end position="230"/>
    </location>
</feature>
<feature type="active site" description="Proton acceptor" evidence="1 2">
    <location>
        <position position="120"/>
    </location>
</feature>
<feature type="binding site" evidence="1">
    <location>
        <begin position="10"/>
        <end position="18"/>
    </location>
    <ligand>
        <name>ATP</name>
        <dbReference type="ChEBI" id="CHEBI:30616"/>
    </ligand>
</feature>
<feature type="binding site" evidence="1">
    <location>
        <position position="32"/>
    </location>
    <ligand>
        <name>ATP</name>
        <dbReference type="ChEBI" id="CHEBI:30616"/>
    </ligand>
</feature>
<comment type="catalytic activity">
    <reaction>
        <text>L-seryl-[protein] + ATP = O-phospho-L-seryl-[protein] + ADP + H(+)</text>
        <dbReference type="Rhea" id="RHEA:17989"/>
        <dbReference type="Rhea" id="RHEA-COMP:9863"/>
        <dbReference type="Rhea" id="RHEA-COMP:11604"/>
        <dbReference type="ChEBI" id="CHEBI:15378"/>
        <dbReference type="ChEBI" id="CHEBI:29999"/>
        <dbReference type="ChEBI" id="CHEBI:30616"/>
        <dbReference type="ChEBI" id="CHEBI:83421"/>
        <dbReference type="ChEBI" id="CHEBI:456216"/>
        <dbReference type="EC" id="2.7.11.1"/>
    </reaction>
</comment>
<comment type="catalytic activity">
    <reaction>
        <text>L-threonyl-[protein] + ATP = O-phospho-L-threonyl-[protein] + ADP + H(+)</text>
        <dbReference type="Rhea" id="RHEA:46608"/>
        <dbReference type="Rhea" id="RHEA-COMP:11060"/>
        <dbReference type="Rhea" id="RHEA-COMP:11605"/>
        <dbReference type="ChEBI" id="CHEBI:15378"/>
        <dbReference type="ChEBI" id="CHEBI:30013"/>
        <dbReference type="ChEBI" id="CHEBI:30616"/>
        <dbReference type="ChEBI" id="CHEBI:61977"/>
        <dbReference type="ChEBI" id="CHEBI:456216"/>
        <dbReference type="EC" id="2.7.11.1"/>
    </reaction>
</comment>
<comment type="similarity">
    <text evidence="3">Belongs to the protein kinase superfamily. CAMK Ser/Thr protein kinase family.</text>
</comment>
<proteinExistence type="inferred from homology"/>
<evidence type="ECO:0000255" key="1">
    <source>
        <dbReference type="PROSITE-ProRule" id="PRU00159"/>
    </source>
</evidence>
<evidence type="ECO:0000255" key="2">
    <source>
        <dbReference type="PROSITE-ProRule" id="PRU10027"/>
    </source>
</evidence>
<evidence type="ECO:0000305" key="3"/>
<protein>
    <recommendedName>
        <fullName>Probable serine/threonine-protein kinase ECU02_0550</fullName>
        <ecNumber>2.7.11.1</ecNumber>
    </recommendedName>
</protein>